<accession>Q5P5P2</accession>
<keyword id="KW-0028">Amino-acid biosynthesis</keyword>
<keyword id="KW-0057">Aromatic amino acid biosynthesis</keyword>
<keyword id="KW-0067">ATP-binding</keyword>
<keyword id="KW-0963">Cytoplasm</keyword>
<keyword id="KW-0418">Kinase</keyword>
<keyword id="KW-0460">Magnesium</keyword>
<keyword id="KW-0479">Metal-binding</keyword>
<keyword id="KW-0547">Nucleotide-binding</keyword>
<keyword id="KW-1185">Reference proteome</keyword>
<keyword id="KW-0808">Transferase</keyword>
<sequence>MLVVLVGMMGAGKTTVGREYAKRHQMRFVDCDHEIEARTGVKVPTIFEIEGEAGFRRRESQLLDELTHETGLVLATGGGVVLDPANRAVLAARGIVVYLNVPTQVLWERTRNDRNRPLLQVSNPRERIESLYRERDPLYREVADIIVDGGRGNPGGMVRQVEKAIQNFHKKTCEH</sequence>
<feature type="chain" id="PRO_0000237840" description="Shikimate kinase">
    <location>
        <begin position="1"/>
        <end position="175"/>
    </location>
</feature>
<feature type="binding site" evidence="1">
    <location>
        <begin position="10"/>
        <end position="15"/>
    </location>
    <ligand>
        <name>ATP</name>
        <dbReference type="ChEBI" id="CHEBI:30616"/>
    </ligand>
</feature>
<feature type="binding site" evidence="1">
    <location>
        <position position="14"/>
    </location>
    <ligand>
        <name>Mg(2+)</name>
        <dbReference type="ChEBI" id="CHEBI:18420"/>
    </ligand>
</feature>
<feature type="binding site" evidence="1">
    <location>
        <position position="32"/>
    </location>
    <ligand>
        <name>substrate</name>
    </ligand>
</feature>
<feature type="binding site" evidence="1">
    <location>
        <position position="56"/>
    </location>
    <ligand>
        <name>substrate</name>
    </ligand>
</feature>
<feature type="binding site" evidence="1">
    <location>
        <position position="78"/>
    </location>
    <ligand>
        <name>substrate</name>
    </ligand>
</feature>
<feature type="binding site" evidence="1">
    <location>
        <position position="116"/>
    </location>
    <ligand>
        <name>ATP</name>
        <dbReference type="ChEBI" id="CHEBI:30616"/>
    </ligand>
</feature>
<feature type="binding site" evidence="1">
    <location>
        <position position="135"/>
    </location>
    <ligand>
        <name>substrate</name>
    </ligand>
</feature>
<dbReference type="EC" id="2.7.1.71" evidence="1"/>
<dbReference type="EMBL" id="CR555306">
    <property type="protein sequence ID" value="CAI07370.1"/>
    <property type="molecule type" value="Genomic_DNA"/>
</dbReference>
<dbReference type="SMR" id="Q5P5P2"/>
<dbReference type="STRING" id="76114.ebA2258"/>
<dbReference type="KEGG" id="eba:ebA2258"/>
<dbReference type="eggNOG" id="COG0703">
    <property type="taxonomic scope" value="Bacteria"/>
</dbReference>
<dbReference type="HOGENOM" id="CLU_057607_2_2_4"/>
<dbReference type="UniPathway" id="UPA00053">
    <property type="reaction ID" value="UER00088"/>
</dbReference>
<dbReference type="Proteomes" id="UP000006552">
    <property type="component" value="Chromosome"/>
</dbReference>
<dbReference type="GO" id="GO:0005829">
    <property type="term" value="C:cytosol"/>
    <property type="evidence" value="ECO:0007669"/>
    <property type="project" value="TreeGrafter"/>
</dbReference>
<dbReference type="GO" id="GO:0005524">
    <property type="term" value="F:ATP binding"/>
    <property type="evidence" value="ECO:0007669"/>
    <property type="project" value="UniProtKB-UniRule"/>
</dbReference>
<dbReference type="GO" id="GO:0000287">
    <property type="term" value="F:magnesium ion binding"/>
    <property type="evidence" value="ECO:0007669"/>
    <property type="project" value="UniProtKB-UniRule"/>
</dbReference>
<dbReference type="GO" id="GO:0004765">
    <property type="term" value="F:shikimate kinase activity"/>
    <property type="evidence" value="ECO:0007669"/>
    <property type="project" value="UniProtKB-UniRule"/>
</dbReference>
<dbReference type="GO" id="GO:0008652">
    <property type="term" value="P:amino acid biosynthetic process"/>
    <property type="evidence" value="ECO:0007669"/>
    <property type="project" value="UniProtKB-KW"/>
</dbReference>
<dbReference type="GO" id="GO:0009073">
    <property type="term" value="P:aromatic amino acid family biosynthetic process"/>
    <property type="evidence" value="ECO:0007669"/>
    <property type="project" value="UniProtKB-KW"/>
</dbReference>
<dbReference type="GO" id="GO:0009423">
    <property type="term" value="P:chorismate biosynthetic process"/>
    <property type="evidence" value="ECO:0007669"/>
    <property type="project" value="UniProtKB-UniRule"/>
</dbReference>
<dbReference type="CDD" id="cd00464">
    <property type="entry name" value="SK"/>
    <property type="match status" value="1"/>
</dbReference>
<dbReference type="Gene3D" id="3.40.50.300">
    <property type="entry name" value="P-loop containing nucleotide triphosphate hydrolases"/>
    <property type="match status" value="1"/>
</dbReference>
<dbReference type="HAMAP" id="MF_00109">
    <property type="entry name" value="Shikimate_kinase"/>
    <property type="match status" value="1"/>
</dbReference>
<dbReference type="InterPro" id="IPR027417">
    <property type="entry name" value="P-loop_NTPase"/>
</dbReference>
<dbReference type="InterPro" id="IPR031322">
    <property type="entry name" value="Shikimate/glucono_kinase"/>
</dbReference>
<dbReference type="InterPro" id="IPR000623">
    <property type="entry name" value="Shikimate_kinase/TSH1"/>
</dbReference>
<dbReference type="InterPro" id="IPR023000">
    <property type="entry name" value="Shikimate_kinase_CS"/>
</dbReference>
<dbReference type="PANTHER" id="PTHR21087">
    <property type="entry name" value="SHIKIMATE KINASE"/>
    <property type="match status" value="1"/>
</dbReference>
<dbReference type="PANTHER" id="PTHR21087:SF16">
    <property type="entry name" value="SHIKIMATE KINASE 1, CHLOROPLASTIC"/>
    <property type="match status" value="1"/>
</dbReference>
<dbReference type="Pfam" id="PF01202">
    <property type="entry name" value="SKI"/>
    <property type="match status" value="1"/>
</dbReference>
<dbReference type="PRINTS" id="PR01100">
    <property type="entry name" value="SHIKIMTKNASE"/>
</dbReference>
<dbReference type="SUPFAM" id="SSF52540">
    <property type="entry name" value="P-loop containing nucleoside triphosphate hydrolases"/>
    <property type="match status" value="1"/>
</dbReference>
<dbReference type="PROSITE" id="PS01128">
    <property type="entry name" value="SHIKIMATE_KINASE"/>
    <property type="match status" value="1"/>
</dbReference>
<organism>
    <name type="scientific">Aromatoleum aromaticum (strain DSM 19018 / LMG 30748 / EbN1)</name>
    <name type="common">Azoarcus sp. (strain EbN1)</name>
    <dbReference type="NCBI Taxonomy" id="76114"/>
    <lineage>
        <taxon>Bacteria</taxon>
        <taxon>Pseudomonadati</taxon>
        <taxon>Pseudomonadota</taxon>
        <taxon>Betaproteobacteria</taxon>
        <taxon>Rhodocyclales</taxon>
        <taxon>Rhodocyclaceae</taxon>
        <taxon>Aromatoleum</taxon>
    </lineage>
</organism>
<comment type="function">
    <text evidence="1">Catalyzes the specific phosphorylation of the 3-hydroxyl group of shikimic acid using ATP as a cosubstrate.</text>
</comment>
<comment type="catalytic activity">
    <reaction evidence="1">
        <text>shikimate + ATP = 3-phosphoshikimate + ADP + H(+)</text>
        <dbReference type="Rhea" id="RHEA:13121"/>
        <dbReference type="ChEBI" id="CHEBI:15378"/>
        <dbReference type="ChEBI" id="CHEBI:30616"/>
        <dbReference type="ChEBI" id="CHEBI:36208"/>
        <dbReference type="ChEBI" id="CHEBI:145989"/>
        <dbReference type="ChEBI" id="CHEBI:456216"/>
        <dbReference type="EC" id="2.7.1.71"/>
    </reaction>
</comment>
<comment type="cofactor">
    <cofactor evidence="1">
        <name>Mg(2+)</name>
        <dbReference type="ChEBI" id="CHEBI:18420"/>
    </cofactor>
    <text evidence="1">Binds 1 Mg(2+) ion per subunit.</text>
</comment>
<comment type="pathway">
    <text evidence="1">Metabolic intermediate biosynthesis; chorismate biosynthesis; chorismate from D-erythrose 4-phosphate and phosphoenolpyruvate: step 5/7.</text>
</comment>
<comment type="subunit">
    <text evidence="1">Monomer.</text>
</comment>
<comment type="subcellular location">
    <subcellularLocation>
        <location evidence="1">Cytoplasm</location>
    </subcellularLocation>
</comment>
<comment type="similarity">
    <text evidence="1">Belongs to the shikimate kinase family.</text>
</comment>
<proteinExistence type="inferred from homology"/>
<evidence type="ECO:0000255" key="1">
    <source>
        <dbReference type="HAMAP-Rule" id="MF_00109"/>
    </source>
</evidence>
<gene>
    <name evidence="1" type="primary">aroK</name>
    <name type="ordered locus">AZOSEA12450</name>
    <name type="ORF">ebA2258</name>
</gene>
<reference key="1">
    <citation type="journal article" date="2005" name="Arch. Microbiol.">
        <title>The genome sequence of an anaerobic aromatic-degrading denitrifying bacterium, strain EbN1.</title>
        <authorList>
            <person name="Rabus R."/>
            <person name="Kube M."/>
            <person name="Heider J."/>
            <person name="Beck A."/>
            <person name="Heitmann K."/>
            <person name="Widdel F."/>
            <person name="Reinhardt R."/>
        </authorList>
    </citation>
    <scope>NUCLEOTIDE SEQUENCE [LARGE SCALE GENOMIC DNA]</scope>
    <source>
        <strain>DSM 19018 / LMG 30748 / EbN1</strain>
    </source>
</reference>
<protein>
    <recommendedName>
        <fullName evidence="1">Shikimate kinase</fullName>
        <shortName evidence="1">SK</shortName>
        <ecNumber evidence="1">2.7.1.71</ecNumber>
    </recommendedName>
</protein>
<name>AROK_AROAE</name>